<evidence type="ECO:0000255" key="1">
    <source>
        <dbReference type="HAMAP-Rule" id="MF_01544"/>
    </source>
</evidence>
<gene>
    <name evidence="1" type="primary">aaeA</name>
    <name type="ordered locus">SEN3198</name>
</gene>
<proteinExistence type="inferred from homology"/>
<organism>
    <name type="scientific">Salmonella enteritidis PT4 (strain P125109)</name>
    <dbReference type="NCBI Taxonomy" id="550537"/>
    <lineage>
        <taxon>Bacteria</taxon>
        <taxon>Pseudomonadati</taxon>
        <taxon>Pseudomonadota</taxon>
        <taxon>Gammaproteobacteria</taxon>
        <taxon>Enterobacterales</taxon>
        <taxon>Enterobacteriaceae</taxon>
        <taxon>Salmonella</taxon>
    </lineage>
</organism>
<dbReference type="EMBL" id="AM933172">
    <property type="protein sequence ID" value="CAR34774.1"/>
    <property type="molecule type" value="Genomic_DNA"/>
</dbReference>
<dbReference type="RefSeq" id="WP_000855134.1">
    <property type="nucleotide sequence ID" value="NC_011294.1"/>
</dbReference>
<dbReference type="SMR" id="B5R1A8"/>
<dbReference type="KEGG" id="set:SEN3198"/>
<dbReference type="HOGENOM" id="CLU_018816_15_2_6"/>
<dbReference type="Proteomes" id="UP000000613">
    <property type="component" value="Chromosome"/>
</dbReference>
<dbReference type="GO" id="GO:0005886">
    <property type="term" value="C:plasma membrane"/>
    <property type="evidence" value="ECO:0007669"/>
    <property type="project" value="UniProtKB-SubCell"/>
</dbReference>
<dbReference type="GO" id="GO:0022857">
    <property type="term" value="F:transmembrane transporter activity"/>
    <property type="evidence" value="ECO:0007669"/>
    <property type="project" value="UniProtKB-UniRule"/>
</dbReference>
<dbReference type="FunFam" id="2.40.30.170:FF:000002">
    <property type="entry name" value="p-hydroxybenzoic acid efflux pump subunit AaeA"/>
    <property type="match status" value="1"/>
</dbReference>
<dbReference type="FunFam" id="2.40.50.100:FF:000018">
    <property type="entry name" value="p-hydroxybenzoic acid efflux pump subunit AaeA"/>
    <property type="match status" value="1"/>
</dbReference>
<dbReference type="Gene3D" id="2.40.30.170">
    <property type="match status" value="1"/>
</dbReference>
<dbReference type="Gene3D" id="2.40.50.100">
    <property type="match status" value="1"/>
</dbReference>
<dbReference type="HAMAP" id="MF_01544">
    <property type="entry name" value="AaeA"/>
    <property type="match status" value="1"/>
</dbReference>
<dbReference type="InterPro" id="IPR043602">
    <property type="entry name" value="CusB-like_dom_1"/>
</dbReference>
<dbReference type="InterPro" id="IPR032317">
    <property type="entry name" value="CusB_D23"/>
</dbReference>
<dbReference type="InterPro" id="IPR050393">
    <property type="entry name" value="MFP_Efflux_Pump"/>
</dbReference>
<dbReference type="InterPro" id="IPR022871">
    <property type="entry name" value="PHBA_efflux_pump_AaeA"/>
</dbReference>
<dbReference type="InterPro" id="IPR006143">
    <property type="entry name" value="RND_pump_MFP"/>
</dbReference>
<dbReference type="NCBIfam" id="NF007850">
    <property type="entry name" value="PRK10559.1"/>
    <property type="match status" value="1"/>
</dbReference>
<dbReference type="NCBIfam" id="TIGR01730">
    <property type="entry name" value="RND_mfp"/>
    <property type="match status" value="1"/>
</dbReference>
<dbReference type="PANTHER" id="PTHR30367:SF12">
    <property type="entry name" value="P-HYDROXYBENZOIC ACID EFFLUX PUMP SUBUNIT AAEA"/>
    <property type="match status" value="1"/>
</dbReference>
<dbReference type="PANTHER" id="PTHR30367">
    <property type="entry name" value="P-HYDROXYBENZOIC ACID EFFLUX PUMP SUBUNIT AAEA-RELATED"/>
    <property type="match status" value="1"/>
</dbReference>
<dbReference type="Pfam" id="PF00529">
    <property type="entry name" value="CusB_dom_1"/>
    <property type="match status" value="1"/>
</dbReference>
<dbReference type="Pfam" id="PF16576">
    <property type="entry name" value="HlyD_D23"/>
    <property type="match status" value="1"/>
</dbReference>
<dbReference type="SUPFAM" id="SSF111369">
    <property type="entry name" value="HlyD-like secretion proteins"/>
    <property type="match status" value="1"/>
</dbReference>
<comment type="function">
    <text evidence="1">Forms an efflux pump with AaeB.</text>
</comment>
<comment type="subcellular location">
    <subcellularLocation>
        <location evidence="1">Cell inner membrane</location>
        <topology evidence="1">Single-pass membrane protein</topology>
    </subcellularLocation>
</comment>
<comment type="similarity">
    <text evidence="1">Belongs to the membrane fusion protein (MFP) (TC 8.A.1) family.</text>
</comment>
<reference key="1">
    <citation type="journal article" date="2008" name="Genome Res.">
        <title>Comparative genome analysis of Salmonella enteritidis PT4 and Salmonella gallinarum 287/91 provides insights into evolutionary and host adaptation pathways.</title>
        <authorList>
            <person name="Thomson N.R."/>
            <person name="Clayton D.J."/>
            <person name="Windhorst D."/>
            <person name="Vernikos G."/>
            <person name="Davidson S."/>
            <person name="Churcher C."/>
            <person name="Quail M.A."/>
            <person name="Stevens M."/>
            <person name="Jones M.A."/>
            <person name="Watson M."/>
            <person name="Barron A."/>
            <person name="Layton A."/>
            <person name="Pickard D."/>
            <person name="Kingsley R.A."/>
            <person name="Bignell A."/>
            <person name="Clark L."/>
            <person name="Harris B."/>
            <person name="Ormond D."/>
            <person name="Abdellah Z."/>
            <person name="Brooks K."/>
            <person name="Cherevach I."/>
            <person name="Chillingworth T."/>
            <person name="Woodward J."/>
            <person name="Norberczak H."/>
            <person name="Lord A."/>
            <person name="Arrowsmith C."/>
            <person name="Jagels K."/>
            <person name="Moule S."/>
            <person name="Mungall K."/>
            <person name="Saunders M."/>
            <person name="Whitehead S."/>
            <person name="Chabalgoity J.A."/>
            <person name="Maskell D."/>
            <person name="Humphreys T."/>
            <person name="Roberts M."/>
            <person name="Barrow P.A."/>
            <person name="Dougan G."/>
            <person name="Parkhill J."/>
        </authorList>
    </citation>
    <scope>NUCLEOTIDE SEQUENCE [LARGE SCALE GENOMIC DNA]</scope>
    <source>
        <strain>P125109</strain>
    </source>
</reference>
<accession>B5R1A8</accession>
<keyword id="KW-0997">Cell inner membrane</keyword>
<keyword id="KW-1003">Cell membrane</keyword>
<keyword id="KW-0472">Membrane</keyword>
<keyword id="KW-0812">Transmembrane</keyword>
<keyword id="KW-1133">Transmembrane helix</keyword>
<keyword id="KW-0813">Transport</keyword>
<sequence length="310" mass="34545">MKTLTRKLSRTAITLVLVILAFIAIFRAWVYYTESPWTRDARFSADVVAIAPDVAGLITHVNVHDNQLVKKDQVLFTIDQPRYQKALAEAEADVAYYQVLAQEKRQEAGRRNRLGVQAMSREEIDQANNVLQTVLHQLAKAQATRDLAKLDLERTVIRAPADGWVTNLNVYAGEFITRGSTAVALVKKNSFYVQAYMEETKLEGVRPGYRAEITPLGSNRVLKGTVDSVAAGVTNASSTSDAKGMATIDSNLEWVRLAQRVPVRIRLDEQQGNLWPAGTTATVVITGKQDRDASQDSFFRKLAHRLREFG</sequence>
<protein>
    <recommendedName>
        <fullName evidence="1">p-hydroxybenzoic acid efflux pump subunit AaeA</fullName>
        <shortName evidence="1">pHBA efflux pump protein A</shortName>
    </recommendedName>
</protein>
<feature type="chain" id="PRO_1000146724" description="p-hydroxybenzoic acid efflux pump subunit AaeA">
    <location>
        <begin position="1"/>
        <end position="310"/>
    </location>
</feature>
<feature type="transmembrane region" description="Helical" evidence="1">
    <location>
        <begin position="12"/>
        <end position="32"/>
    </location>
</feature>
<name>AAEA_SALEP</name>